<proteinExistence type="evidence at protein level"/>
<dbReference type="GO" id="GO:0005576">
    <property type="term" value="C:extracellular region"/>
    <property type="evidence" value="ECO:0000314"/>
    <property type="project" value="UniProtKB"/>
</dbReference>
<dbReference type="GO" id="GO:0090729">
    <property type="term" value="F:toxin activity"/>
    <property type="evidence" value="ECO:0007669"/>
    <property type="project" value="UniProtKB-KW"/>
</dbReference>
<dbReference type="GO" id="GO:0006952">
    <property type="term" value="P:defense response"/>
    <property type="evidence" value="ECO:0007669"/>
    <property type="project" value="UniProtKB-KW"/>
</dbReference>
<reference evidence="4" key="1">
    <citation type="journal article" date="2015" name="Rapid Commun. Mass Spectrom.">
        <title>Skin secretion peptides: the molecular facet of the deimatic behavior of the four-eyed frog, Physalaemus nattereri (Anura, Leptodactylidae).</title>
        <authorList>
            <person name="Barbosa E.A."/>
            <person name="Iembo T."/>
            <person name="Martins G.R."/>
            <person name="Silva L.P."/>
            <person name="Prates M.V."/>
            <person name="Andrade A.C."/>
            <person name="Bloch C. Jr."/>
        </authorList>
    </citation>
    <scope>PROTEIN SEQUENCE</scope>
    <scope>SUBCELLULAR LOCATION</scope>
    <scope>MASS SPECTROMETRY</scope>
    <scope>IDENTIFICATION BY MASS SPECTROMETRY</scope>
    <source>
        <tissue evidence="3">Skin secretion</tissue>
    </source>
</reference>
<sequence length="9" mass="1017">VPPGFTPFR</sequence>
<accession>C0HKA9</accession>
<keyword id="KW-0878">Amphibian defense peptide</keyword>
<keyword id="KW-1222">Bradykinin receptor impairing toxin</keyword>
<keyword id="KW-0903">Direct protein sequencing</keyword>
<keyword id="KW-1213">G-protein coupled receptor impairing toxin</keyword>
<keyword id="KW-0964">Secreted</keyword>
<keyword id="KW-0800">Toxin</keyword>
<organism evidence="3">
    <name type="scientific">Physalaemus nattereri</name>
    <name type="common">Cuyaba dwarf frog</name>
    <name type="synonym">Eupemphix nattereri</name>
    <dbReference type="NCBI Taxonomy" id="248869"/>
    <lineage>
        <taxon>Eukaryota</taxon>
        <taxon>Metazoa</taxon>
        <taxon>Chordata</taxon>
        <taxon>Craniata</taxon>
        <taxon>Vertebrata</taxon>
        <taxon>Euteleostomi</taxon>
        <taxon>Amphibia</taxon>
        <taxon>Batrachia</taxon>
        <taxon>Anura</taxon>
        <taxon>Neobatrachia</taxon>
        <taxon>Hyloidea</taxon>
        <taxon>Leptodactylidae</taxon>
        <taxon>Leiuperinae</taxon>
        <taxon>Physalaemus</taxon>
    </lineage>
</organism>
<protein>
    <recommendedName>
        <fullName evidence="3">[Val1,Thr6]-bradykinin</fullName>
    </recommendedName>
    <component>
        <recommendedName>
            <fullName evidence="3">Des-Arg9-[Val1,Thr6]-bradykinin</fullName>
        </recommendedName>
    </component>
</protein>
<name>BRKP5_PHYNA</name>
<feature type="peptide" id="PRO_0000438960" description="[Val1,Thr6]-bradykinin" evidence="2">
    <location>
        <begin position="1"/>
        <end position="9"/>
    </location>
</feature>
<feature type="peptide" id="PRO_0000438961" description="Des-Arg9-[Val1,Thr6]-bradykinin" evidence="2">
    <location>
        <begin position="1"/>
        <end position="8"/>
    </location>
</feature>
<comment type="function">
    <molecule>[Val1,Thr6]-bradykinin</molecule>
    <text evidence="1">Induces contraction of rat ileum smooth muscle but has no activity towards rat smooth muscle from tail artery, urinary bladder or uterus. Binds to both bradykinin receptor B1 (BDKRB1) and B2 (BDKRB2); the effect via BDKRB1 is stronger.</text>
</comment>
<comment type="function">
    <molecule>Des-Arg9-[Val1,Thr6]-bradykinin</molecule>
    <text evidence="1">Induces contraction of rat ileum smooth muscle. Binds to bradykinin receptors.</text>
</comment>
<comment type="subcellular location">
    <subcellularLocation>
        <location evidence="2">Secreted</location>
    </subcellularLocation>
</comment>
<comment type="tissue specificity">
    <text evidence="5">Expressed by the skin glands.</text>
</comment>
<comment type="mass spectrometry" mass="1017.62" method="MALDI" evidence="2">
    <molecule>[Val1,Thr6]-bradykinin</molecule>
    <text>[Val1,Thr6]-bradykinin.</text>
</comment>
<comment type="mass spectrometry" mass="861.52" method="MALDI" evidence="2">
    <molecule>Des-Arg9-[Val1,Thr6]-bradykinin</molecule>
    <text>[Val1,Thr6,des-Arg9]-bradykinin.</text>
</comment>
<comment type="similarity">
    <text>Belongs to the bradykinin-related peptide family.</text>
</comment>
<evidence type="ECO:0000250" key="1">
    <source>
        <dbReference type="UniProtKB" id="P84899"/>
    </source>
</evidence>
<evidence type="ECO:0000269" key="2">
    <source>
    </source>
</evidence>
<evidence type="ECO:0000303" key="3">
    <source>
    </source>
</evidence>
<evidence type="ECO:0000305" key="4"/>
<evidence type="ECO:0000305" key="5">
    <source>
    </source>
</evidence>